<keyword id="KW-1185">Reference proteome</keyword>
<keyword id="KW-0687">Ribonucleoprotein</keyword>
<keyword id="KW-0689">Ribosomal protein</keyword>
<keyword id="KW-0694">RNA-binding</keyword>
<keyword id="KW-0699">rRNA-binding</keyword>
<keyword id="KW-0820">tRNA-binding</keyword>
<proteinExistence type="inferred from homology"/>
<protein>
    <recommendedName>
        <fullName evidence="1">Large ribosomal subunit protein uL16</fullName>
    </recommendedName>
    <alternativeName>
        <fullName evidence="2">50S ribosomal protein L16</fullName>
    </alternativeName>
</protein>
<organism>
    <name type="scientific">Cereibacter sphaeroides (strain ATCC 17023 / DSM 158 / JCM 6121 / CCUG 31486 / LMG 2827 / NBRC 12203 / NCIMB 8253 / ATH 2.4.1.)</name>
    <name type="common">Rhodobacter sphaeroides</name>
    <dbReference type="NCBI Taxonomy" id="272943"/>
    <lineage>
        <taxon>Bacteria</taxon>
        <taxon>Pseudomonadati</taxon>
        <taxon>Pseudomonadota</taxon>
        <taxon>Alphaproteobacteria</taxon>
        <taxon>Rhodobacterales</taxon>
        <taxon>Paracoccaceae</taxon>
        <taxon>Cereibacter</taxon>
    </lineage>
</organism>
<reference key="1">
    <citation type="submission" date="2005-09" db="EMBL/GenBank/DDBJ databases">
        <title>Complete sequence of chromosome 1 of Rhodobacter sphaeroides 2.4.1.</title>
        <authorList>
            <person name="Copeland A."/>
            <person name="Lucas S."/>
            <person name="Lapidus A."/>
            <person name="Barry K."/>
            <person name="Detter J.C."/>
            <person name="Glavina T."/>
            <person name="Hammon N."/>
            <person name="Israni S."/>
            <person name="Pitluck S."/>
            <person name="Richardson P."/>
            <person name="Mackenzie C."/>
            <person name="Choudhary M."/>
            <person name="Larimer F."/>
            <person name="Hauser L.J."/>
            <person name="Land M."/>
            <person name="Donohue T.J."/>
            <person name="Kaplan S."/>
        </authorList>
    </citation>
    <scope>NUCLEOTIDE SEQUENCE [LARGE SCALE GENOMIC DNA]</scope>
    <source>
        <strain>ATCC 17023 / DSM 158 / JCM 6121 / CCUG 31486 / LMG 2827 / NBRC 12203 / NCIMB 8253 / ATH 2.4.1.</strain>
    </source>
</reference>
<comment type="function">
    <text evidence="1">Binds 23S rRNA and is also seen to make contacts with the A and possibly P site tRNAs.</text>
</comment>
<comment type="subunit">
    <text evidence="1">Part of the 50S ribosomal subunit.</text>
</comment>
<comment type="similarity">
    <text evidence="1">Belongs to the universal ribosomal protein uL16 family.</text>
</comment>
<feature type="chain" id="PRO_0000062186" description="Large ribosomal subunit protein uL16">
    <location>
        <begin position="1"/>
        <end position="137"/>
    </location>
</feature>
<sequence length="137" mass="15609">MLQPKRTKFRKQHKGRIHGEAKGGFLLNFGGFGLKATEPERVTARQIEAARRAITRHMKRQGRVWIRVFPDVPVTSKPTEVRMGKGKGSVDYWAAKVKPGRIMFEIDGVSETIAREALRLGAMKLPVMTRIVVREDW</sequence>
<gene>
    <name evidence="1" type="primary">rplP</name>
    <name type="ordered locus">RHOS4_03010</name>
    <name type="ORF">RSP_1723</name>
</gene>
<dbReference type="EMBL" id="CP000143">
    <property type="protein sequence ID" value="ABA77869.1"/>
    <property type="molecule type" value="Genomic_DNA"/>
</dbReference>
<dbReference type="RefSeq" id="WP_002722499.1">
    <property type="nucleotide sequence ID" value="NZ_CP030271.1"/>
</dbReference>
<dbReference type="RefSeq" id="YP_351770.1">
    <property type="nucleotide sequence ID" value="NC_007493.2"/>
</dbReference>
<dbReference type="SMR" id="Q3J5R5"/>
<dbReference type="STRING" id="272943.RSP_1723"/>
<dbReference type="EnsemblBacteria" id="ABA77869">
    <property type="protein sequence ID" value="ABA77869"/>
    <property type="gene ID" value="RSP_1723"/>
</dbReference>
<dbReference type="GeneID" id="67445507"/>
<dbReference type="KEGG" id="rsp:RSP_1723"/>
<dbReference type="PATRIC" id="fig|272943.9.peg.600"/>
<dbReference type="eggNOG" id="COG0197">
    <property type="taxonomic scope" value="Bacteria"/>
</dbReference>
<dbReference type="OrthoDB" id="9802589at2"/>
<dbReference type="PhylomeDB" id="Q3J5R5"/>
<dbReference type="Proteomes" id="UP000002703">
    <property type="component" value="Chromosome 1"/>
</dbReference>
<dbReference type="GO" id="GO:0022625">
    <property type="term" value="C:cytosolic large ribosomal subunit"/>
    <property type="evidence" value="ECO:0007669"/>
    <property type="project" value="TreeGrafter"/>
</dbReference>
<dbReference type="GO" id="GO:0019843">
    <property type="term" value="F:rRNA binding"/>
    <property type="evidence" value="ECO:0007669"/>
    <property type="project" value="UniProtKB-UniRule"/>
</dbReference>
<dbReference type="GO" id="GO:0003735">
    <property type="term" value="F:structural constituent of ribosome"/>
    <property type="evidence" value="ECO:0007669"/>
    <property type="project" value="InterPro"/>
</dbReference>
<dbReference type="GO" id="GO:0000049">
    <property type="term" value="F:tRNA binding"/>
    <property type="evidence" value="ECO:0007669"/>
    <property type="project" value="UniProtKB-KW"/>
</dbReference>
<dbReference type="GO" id="GO:0006412">
    <property type="term" value="P:translation"/>
    <property type="evidence" value="ECO:0007669"/>
    <property type="project" value="UniProtKB-UniRule"/>
</dbReference>
<dbReference type="CDD" id="cd01433">
    <property type="entry name" value="Ribosomal_L16_L10e"/>
    <property type="match status" value="1"/>
</dbReference>
<dbReference type="FunFam" id="3.90.1170.10:FF:000001">
    <property type="entry name" value="50S ribosomal protein L16"/>
    <property type="match status" value="1"/>
</dbReference>
<dbReference type="Gene3D" id="3.90.1170.10">
    <property type="entry name" value="Ribosomal protein L10e/L16"/>
    <property type="match status" value="1"/>
</dbReference>
<dbReference type="HAMAP" id="MF_01342">
    <property type="entry name" value="Ribosomal_uL16"/>
    <property type="match status" value="1"/>
</dbReference>
<dbReference type="InterPro" id="IPR047873">
    <property type="entry name" value="Ribosomal_uL16"/>
</dbReference>
<dbReference type="InterPro" id="IPR000114">
    <property type="entry name" value="Ribosomal_uL16_bact-type"/>
</dbReference>
<dbReference type="InterPro" id="IPR020798">
    <property type="entry name" value="Ribosomal_uL16_CS"/>
</dbReference>
<dbReference type="InterPro" id="IPR016180">
    <property type="entry name" value="Ribosomal_uL16_dom"/>
</dbReference>
<dbReference type="InterPro" id="IPR036920">
    <property type="entry name" value="Ribosomal_uL16_sf"/>
</dbReference>
<dbReference type="NCBIfam" id="TIGR01164">
    <property type="entry name" value="rplP_bact"/>
    <property type="match status" value="1"/>
</dbReference>
<dbReference type="PANTHER" id="PTHR12220">
    <property type="entry name" value="50S/60S RIBOSOMAL PROTEIN L16"/>
    <property type="match status" value="1"/>
</dbReference>
<dbReference type="PANTHER" id="PTHR12220:SF13">
    <property type="entry name" value="LARGE RIBOSOMAL SUBUNIT PROTEIN UL16M"/>
    <property type="match status" value="1"/>
</dbReference>
<dbReference type="Pfam" id="PF00252">
    <property type="entry name" value="Ribosomal_L16"/>
    <property type="match status" value="1"/>
</dbReference>
<dbReference type="PRINTS" id="PR00060">
    <property type="entry name" value="RIBOSOMALL16"/>
</dbReference>
<dbReference type="SUPFAM" id="SSF54686">
    <property type="entry name" value="Ribosomal protein L16p/L10e"/>
    <property type="match status" value="1"/>
</dbReference>
<dbReference type="PROSITE" id="PS00586">
    <property type="entry name" value="RIBOSOMAL_L16_1"/>
    <property type="match status" value="1"/>
</dbReference>
<dbReference type="PROSITE" id="PS00701">
    <property type="entry name" value="RIBOSOMAL_L16_2"/>
    <property type="match status" value="1"/>
</dbReference>
<evidence type="ECO:0000255" key="1">
    <source>
        <dbReference type="HAMAP-Rule" id="MF_01342"/>
    </source>
</evidence>
<evidence type="ECO:0000305" key="2"/>
<name>RL16_CERS4</name>
<accession>Q3J5R5</accession>